<protein>
    <recommendedName>
        <fullName evidence="5">Bradyzoite-formation deficient protein 1</fullName>
    </recommendedName>
</protein>
<reference key="1">
    <citation type="journal article" date="2020" name="Cell">
        <title>Identification of a master regulator of differentiation in Toxoplasma.</title>
        <authorList>
            <person name="Waldman B.S."/>
            <person name="Schwarz D."/>
            <person name="Wadsworth M.H. II"/>
            <person name="Saeij J.P."/>
            <person name="Shalek A.K."/>
            <person name="Lourido S."/>
        </authorList>
    </citation>
    <scope>NUCLEOTIDE SEQUENCE [MRNA]</scope>
    <scope>FUNCTION</scope>
    <scope>SUBCELLULAR LOCATION</scope>
    <scope>DEVELOPMENTAL STAGE</scope>
    <scope>INDUCTION</scope>
    <scope>DISRUPTION PHENOTYPE</scope>
</reference>
<reference key="2">
    <citation type="submission" date="2013-04" db="EMBL/GenBank/DDBJ databases">
        <authorList>
            <person name="Sibley D."/>
            <person name="Venepally P."/>
            <person name="Karamycheva S."/>
            <person name="Hadjithomas M."/>
            <person name="Khan A."/>
            <person name="Brunk B."/>
            <person name="Roos D."/>
            <person name="Caler E."/>
            <person name="Lorenzi H."/>
        </authorList>
    </citation>
    <scope>NUCLEOTIDE SEQUENCE [LARGE SCALE GENOMIC DNA]</scope>
    <source>
        <strain>ATCC 50611 / Me49</strain>
    </source>
</reference>
<sequence>MEGASTQPMPHSQRERQAPVHAISGTWENCDQAGEYKGTACCVVERQVYSTETHAVEGCCSTRWNGVKEEKGGGEVSSRTALAGVVHLYTNSDGNAYTHISDQGMRQDEAVAGQEQRHLNCEGEHEKKGNVAAGGGTLMVTKSEIEPCDDYYSVQRGQSCAGERAPRDGCCRLLDGSRVDPAEGGSEEDENCYTHVLQKHLGQMPTAPYQGDDRLQTDLRLGDFQSGPSDALSGHHVTRTPILSPHGRYSEYISERLAWQYAERPGHGIAAENTVVMHSHTGEATGSLRADAPSQWSTESRLQFHVGSQFTTENPELFAGIVGLDTEQFDARNAEALHWRQQGEARSTETECIADITPERGNRSTIRQWNKPEAARQEYHRASASARGPEETNIITRGAHSDDQSIDAAAPGCWAARHLTSRQHPNPRPRMKEEHCGREREVLSSEQPSDCGETQKTPASHSLVLDSKSRADASQTSPYTRNDEIQTIRAFEEQCLEVQLPQSRLRRGIDYEAGMSQLAPTTQELKAKVLTTGLSPSCPNAAVLRASVPLSMDTTVTVHLADVEDPSSKRHTPIENSISSGHCDPPCSSPGGMMEPRVSVSGLGSPHNCVEDREIARHGDGIGRDILERRPLPFSPAALLTGCSSTAASSVVSGDVFTSVAASARANACRSSTDTQEESGCGDAPRYVLLFPDEQDERLGHAQTSIATPSGSGQSKCMFKGDGNAEATFREEVKSSELRTPSRIQTRRLLPGVQLQGMDCDGCGASDPQKGRPAPETGFLPEICHFSPQHPWQPGSEVNQGYRAGADYGTSRVQQSLENCSWEESVDEGEQPRTTSSSSYGQDTQKRDSFLQSIDNRIASEPVDPTGTCGYNSTPETFRSGCIMRDQMLGVKPHLSHVSLTREGKHRGQQTHLRKTGVPTWSAEEDASLAELVSRKGFKWALISSQLTGAFGIPRTGKQCRERWFNHVNPEVKKGDWSAEEDAMILMLQNELGNRWATIAKKLRGRTENAVKNRFISLSNARLGYGRPKRDGSSADCFSNRRTGSGKSSGITGMPNLCQSVCSAGTTKKDSSESGNHFVMSVATKVFEFSDVAVDSGVSRPRQCTGTSPSCGHPSAGEGDPSHLKNTDVVGREQPIQRNNNESGKAAEQTAFSGVKTGTLSVSQDAVPVGRLVVASVGPQHIRRSFPTDETLPKFAAKEHNNQQLNDEREHLEQSNSTSEGSFLASAHEHADIARSDPDEDTLEPHQKRRRKRCAIAYQGEERGDSNGLDSIADRAEQAGNFQAMRKANTDNGKVDYLEPHRYEKLSPCEQVIQPSLRPACDHRGAPQNSVESGEQSPDAQRQLCNQGCRTSNRTVHSSVYSNEVESNELRGVFRLAEQSLPSQSGDPAWSTAGFQLSILPQKVEVHSRNKCDGQNVMYRCSPGSLPTTHQQTVFHYDRDSSRFPCAAKPAAASGAQGTIEENDGLVKEGPSMIVTGSSVEVVHCCSVSLRRRDRSLPSAQLWTSQETESDTNPSPNQQHESCHQYCKRHAAWCGKTDQFSKLTSSHQENSSGKDACLVSVSPTVTLDDLQKQSRGTVLSAKEEIGKPETWSHVVDNTYSKTDHQRASLCAENSSGCAEGSTELVRFSGGSVKSGSSMSVDCGNGNPDDCQDCKAEEIWRGEQRYAERGHSVESRGAGSVGRSTDLTITDSGSMPLCASPIGRPPADNDTLFLSDARCNVVAQLNHQDNSRISRLASCEEEFLACGGERLINASGGFKPDGGCLYRMQQAGACNTKLHRPVHSCSTIDSEQLEDLPSVEKAVGDRSFSSKRKGDIPPFAEWKKNDELRELYRGVSEAVSHGQPGDWNGSWPGISGRAHQTSSCFPDRVNASDRRELNSWRLHVSAAAELGSSHIWNSQSYASASVSRDKQREPPKNGLTGCDVPEYLGTSQSAGLPAANAHERGNFYGHDRCRPREGERVRWVGLQRNRKPEASVSSGASNSATTARPKDSTEPDEGNSEGVSTRRKDSGSTAATISRAVSLGMVTPSAACENSSSLTDTSPPLSHRPSFSFTHCCEETLSRCNSSNYLCPPATCHTSDDGRSLGPSREAQALRSLSLASGYGYPGIPAEATSFWQGSSLEHSIMEPQMVPSDDELRLWVHPRDAANWSQSTLKPVAVVSGTDAGDDQHKTPENLTPESGQAHRRDGHDMQRVQRCDDEGECPPTTVELTFPHSHSSDEMQDLPSKVQGNFLLRRELSDSLQHETAESVAGYGWMRIRNAGDIPNSKVPCAWEQCMPASERERGVNDHMSSEASRMSKAASSSFVPSSCTDAPVVRVGEDTTKSVCEEQQLCEGGNRGSLSPEATGFESLGPPLQLLLVDGYTPFEPVVEKVSQTMEQTLFPVPGQETDTRDEDGRYNCECLQNRQPPLHSGGLM</sequence>
<evidence type="ECO:0000255" key="1">
    <source>
        <dbReference type="PROSITE-ProRule" id="PRU00133"/>
    </source>
</evidence>
<evidence type="ECO:0000255" key="2">
    <source>
        <dbReference type="PROSITE-ProRule" id="PRU00625"/>
    </source>
</evidence>
<evidence type="ECO:0000256" key="3">
    <source>
        <dbReference type="SAM" id="MobiDB-lite"/>
    </source>
</evidence>
<evidence type="ECO:0000269" key="4">
    <source>
    </source>
</evidence>
<evidence type="ECO:0000303" key="5">
    <source>
    </source>
</evidence>
<evidence type="ECO:0000305" key="6"/>
<evidence type="ECO:0000312" key="7">
    <source>
        <dbReference type="EMBL" id="EPT28189.1"/>
    </source>
</evidence>
<accession>S8GIB3</accession>
<organism>
    <name type="scientific">Toxoplasma gondii (strain ATCC 50611 / Me49)</name>
    <dbReference type="NCBI Taxonomy" id="508771"/>
    <lineage>
        <taxon>Eukaryota</taxon>
        <taxon>Sar</taxon>
        <taxon>Alveolata</taxon>
        <taxon>Apicomplexa</taxon>
        <taxon>Conoidasida</taxon>
        <taxon>Coccidia</taxon>
        <taxon>Eucoccidiorida</taxon>
        <taxon>Eimeriorina</taxon>
        <taxon>Sarcocystidae</taxon>
        <taxon>Toxoplasma</taxon>
    </lineage>
</organism>
<feature type="chain" id="PRO_0000450214" description="Bradyzoite-formation deficient protein 1">
    <location>
        <begin position="1"/>
        <end position="2415"/>
    </location>
</feature>
<feature type="domain" description="Myb-like" evidence="1">
    <location>
        <begin position="921"/>
        <end position="968"/>
    </location>
</feature>
<feature type="domain" description="HTH myb-type" evidence="2">
    <location>
        <begin position="969"/>
        <end position="1023"/>
    </location>
</feature>
<feature type="DNA-binding region" description="H-T-H motif" evidence="2">
    <location>
        <begin position="996"/>
        <end position="1019"/>
    </location>
</feature>
<feature type="region of interest" description="Disordered" evidence="3">
    <location>
        <begin position="369"/>
        <end position="392"/>
    </location>
</feature>
<feature type="region of interest" description="Disordered" evidence="3">
    <location>
        <begin position="418"/>
        <end position="481"/>
    </location>
</feature>
<feature type="region of interest" description="Disordered" evidence="3">
    <location>
        <begin position="761"/>
        <end position="845"/>
    </location>
</feature>
<feature type="region of interest" description="Disordered" evidence="3">
    <location>
        <begin position="1027"/>
        <end position="1050"/>
    </location>
</feature>
<feature type="region of interest" description="Disordered" evidence="3">
    <location>
        <begin position="1098"/>
        <end position="1127"/>
    </location>
</feature>
<feature type="region of interest" description="Disordered" evidence="3">
    <location>
        <begin position="1206"/>
        <end position="1270"/>
    </location>
</feature>
<feature type="region of interest" description="Disordered" evidence="3">
    <location>
        <begin position="1319"/>
        <end position="1343"/>
    </location>
</feature>
<feature type="region of interest" description="Disordered" evidence="3">
    <location>
        <begin position="1501"/>
        <end position="1521"/>
    </location>
</feature>
<feature type="region of interest" description="Disordered" evidence="3">
    <location>
        <begin position="1905"/>
        <end position="1932"/>
    </location>
</feature>
<feature type="region of interest" description="Disordered" evidence="3">
    <location>
        <begin position="1959"/>
        <end position="2013"/>
    </location>
</feature>
<feature type="region of interest" description="Disordered" evidence="3">
    <location>
        <begin position="2161"/>
        <end position="2222"/>
    </location>
</feature>
<feature type="compositionally biased region" description="Basic residues" evidence="3">
    <location>
        <begin position="419"/>
        <end position="429"/>
    </location>
</feature>
<feature type="compositionally biased region" description="Basic and acidic residues" evidence="3">
    <location>
        <begin position="430"/>
        <end position="443"/>
    </location>
</feature>
<feature type="compositionally biased region" description="Polar residues" evidence="3">
    <location>
        <begin position="444"/>
        <end position="460"/>
    </location>
</feature>
<feature type="compositionally biased region" description="Polar residues" evidence="3">
    <location>
        <begin position="832"/>
        <end position="843"/>
    </location>
</feature>
<feature type="compositionally biased region" description="Polar residues" evidence="3">
    <location>
        <begin position="1036"/>
        <end position="1050"/>
    </location>
</feature>
<feature type="compositionally biased region" description="Basic and acidic residues" evidence="3">
    <location>
        <begin position="1227"/>
        <end position="1237"/>
    </location>
</feature>
<feature type="compositionally biased region" description="Polar residues" evidence="3">
    <location>
        <begin position="1327"/>
        <end position="1343"/>
    </location>
</feature>
<feature type="compositionally biased region" description="Polar residues" evidence="3">
    <location>
        <begin position="1501"/>
        <end position="1520"/>
    </location>
</feature>
<feature type="compositionally biased region" description="Polar residues" evidence="3">
    <location>
        <begin position="1974"/>
        <end position="1985"/>
    </location>
</feature>
<feature type="compositionally biased region" description="Basic and acidic residues" evidence="3">
    <location>
        <begin position="2181"/>
        <end position="2197"/>
    </location>
</feature>
<gene>
    <name evidence="5" type="primary">BFD1</name>
    <name evidence="7" type="ORF">TGME49_200385</name>
</gene>
<proteinExistence type="evidence at transcript level"/>
<comment type="function">
    <text evidence="4">Master transcription factor that controls the differentiation of acute-stage tachyzoite parasites into chronic-stage bradyzoites, which form intracellular cysts resistant to immune clearance and existing therapies (PubMed:31955846). Sufficient to drive differentiation into bradyzoite stage (PubMed:31955846). Following translation in response to stress conditions, binds to the promoter of many chronic stage-specific genes and promotes their expression, thereby driving differentiation into bradyzoites (PubMed:31955846).</text>
</comment>
<comment type="subcellular location">
    <subcellularLocation>
        <location evidence="4">Nucleus</location>
    </subcellularLocation>
</comment>
<comment type="developmental stage">
    <text evidence="4">Expressed at a similar level during both the chronic and acute stages of infection (PubMed:31955846). However, transcripts are only translated during the chronic stage of infection, in response to stress conditions (PubMed:31955846).</text>
</comment>
<comment type="induction">
    <text evidence="4">Regulated at the translation level: while it is expressed during both the chronic and acute stages of infection, transcripts are only translated during the chronic stage of infection.</text>
</comment>
<comment type="disruption phenotype">
    <text evidence="4">Parasites grow normally under standard conditions but fail to differentiate into chronic-stage bradyzoites under all induction conditions tested (PubMed:31955846). Parasites are unable to form brain cysts in mice (PubMed:31955846).</text>
</comment>
<comment type="sequence caution" evidence="6">
    <conflict type="erroneous gene model prediction">
        <sequence resource="EMBL-CDS" id="EPT28189"/>
    </conflict>
</comment>
<dbReference type="EMBL" id="KE138831">
    <property type="protein sequence ID" value="EPT28189.1"/>
    <property type="status" value="ALT_SEQ"/>
    <property type="molecule type" value="Genomic_DNA"/>
</dbReference>
<dbReference type="RefSeq" id="XP_018636521.1">
    <property type="nucleotide sequence ID" value="XM_018779152.1"/>
</dbReference>
<dbReference type="SMR" id="S8GIB3"/>
<dbReference type="EnsemblProtists" id="TGME49_200385-t26_1">
    <property type="protein sequence ID" value="TGME49_200385-t26_1"/>
    <property type="gene ID" value="TGME49_200385"/>
</dbReference>
<dbReference type="GeneID" id="7895875"/>
<dbReference type="KEGG" id="tgo:TGME49_200385"/>
<dbReference type="VEuPathDB" id="ToxoDB:TGME49_200385"/>
<dbReference type="OrthoDB" id="330397at2759"/>
<dbReference type="Proteomes" id="UP000001529">
    <property type="component" value="Chromosome VIII"/>
</dbReference>
<dbReference type="GO" id="GO:0005634">
    <property type="term" value="C:nucleus"/>
    <property type="evidence" value="ECO:0000314"/>
    <property type="project" value="UniProtKB"/>
</dbReference>
<dbReference type="GO" id="GO:0001216">
    <property type="term" value="F:DNA-binding transcription activator activity"/>
    <property type="evidence" value="ECO:0000314"/>
    <property type="project" value="UniProtKB"/>
</dbReference>
<dbReference type="GO" id="GO:0000981">
    <property type="term" value="F:DNA-binding transcription factor activity, RNA polymerase II-specific"/>
    <property type="evidence" value="ECO:0007669"/>
    <property type="project" value="TreeGrafter"/>
</dbReference>
<dbReference type="GO" id="GO:0000978">
    <property type="term" value="F:RNA polymerase II cis-regulatory region sequence-specific DNA binding"/>
    <property type="evidence" value="ECO:0007669"/>
    <property type="project" value="TreeGrafter"/>
</dbReference>
<dbReference type="GO" id="GO:0045165">
    <property type="term" value="P:cell fate commitment"/>
    <property type="evidence" value="ECO:0000314"/>
    <property type="project" value="UniProtKB"/>
</dbReference>
<dbReference type="GO" id="GO:0097436">
    <property type="term" value="P:entry into dormancy"/>
    <property type="evidence" value="ECO:0000314"/>
    <property type="project" value="UniProtKB"/>
</dbReference>
<dbReference type="CDD" id="cd00167">
    <property type="entry name" value="SANT"/>
    <property type="match status" value="2"/>
</dbReference>
<dbReference type="Gene3D" id="1.10.10.60">
    <property type="entry name" value="Homeodomain-like"/>
    <property type="match status" value="2"/>
</dbReference>
<dbReference type="InterPro" id="IPR009057">
    <property type="entry name" value="Homeodomain-like_sf"/>
</dbReference>
<dbReference type="InterPro" id="IPR017930">
    <property type="entry name" value="Myb_dom"/>
</dbReference>
<dbReference type="InterPro" id="IPR050560">
    <property type="entry name" value="MYB_TF"/>
</dbReference>
<dbReference type="InterPro" id="IPR001005">
    <property type="entry name" value="SANT/Myb"/>
</dbReference>
<dbReference type="PANTHER" id="PTHR45614">
    <property type="entry name" value="MYB PROTEIN-RELATED"/>
    <property type="match status" value="1"/>
</dbReference>
<dbReference type="PANTHER" id="PTHR45614:SF232">
    <property type="entry name" value="TRANSCRIPTION FACTOR MYB3R-2"/>
    <property type="match status" value="1"/>
</dbReference>
<dbReference type="Pfam" id="PF13921">
    <property type="entry name" value="Myb_DNA-bind_6"/>
    <property type="match status" value="1"/>
</dbReference>
<dbReference type="SMART" id="SM00717">
    <property type="entry name" value="SANT"/>
    <property type="match status" value="2"/>
</dbReference>
<dbReference type="SUPFAM" id="SSF46689">
    <property type="entry name" value="Homeodomain-like"/>
    <property type="match status" value="1"/>
</dbReference>
<dbReference type="PROSITE" id="PS51294">
    <property type="entry name" value="HTH_MYB"/>
    <property type="match status" value="1"/>
</dbReference>
<dbReference type="PROSITE" id="PS50090">
    <property type="entry name" value="MYB_LIKE"/>
    <property type="match status" value="1"/>
</dbReference>
<name>BFD1_TOXGM</name>
<keyword id="KW-0010">Activator</keyword>
<keyword id="KW-1136">Bradyzoite</keyword>
<keyword id="KW-0221">Differentiation</keyword>
<keyword id="KW-0238">DNA-binding</keyword>
<keyword id="KW-0539">Nucleus</keyword>
<keyword id="KW-1185">Reference proteome</keyword>
<keyword id="KW-0804">Transcription</keyword>
<keyword id="KW-0805">Transcription regulation</keyword>